<protein>
    <recommendedName>
        <fullName evidence="1">Large ribosomal subunit protein uL3</fullName>
    </recommendedName>
    <alternativeName>
        <fullName evidence="2">50S ribosomal protein L3</fullName>
    </alternativeName>
</protein>
<sequence length="219" mass="23548">MRSHISVMGKKEGMIHIFDKDGSLVACSVIRVEPNVVTQIKTKESDGYFSLQIGAEEMNAPAHTITKRVSKPKLGHLRKAGGRVFRFLKEVRGSEEALNGVSLGDAFGLEVFEDVSSVDVRGISKGKGFQGVMKKFGFRGGPGSHGSGFHRHAGSIGMRSTPGRCFPGSKRPSHMGAENVTVKNLEVIKVDLEKKVLLVKGAIPGARGSIVIVKHSSRT</sequence>
<gene>
    <name evidence="1" type="primary">rplC</name>
    <name type="synonym">rl3</name>
    <name type="ordered locus">CPn_0647</name>
    <name type="ordered locus">CP_0100</name>
    <name type="ordered locus">CpB0673</name>
</gene>
<reference key="1">
    <citation type="journal article" date="1999" name="Nat. Genet.">
        <title>Comparative genomes of Chlamydia pneumoniae and C. trachomatis.</title>
        <authorList>
            <person name="Kalman S."/>
            <person name="Mitchell W.P."/>
            <person name="Marathe R."/>
            <person name="Lammel C.J."/>
            <person name="Fan J."/>
            <person name="Hyman R.W."/>
            <person name="Olinger L."/>
            <person name="Grimwood J."/>
            <person name="Davis R.W."/>
            <person name="Stephens R.S."/>
        </authorList>
    </citation>
    <scope>NUCLEOTIDE SEQUENCE [LARGE SCALE GENOMIC DNA]</scope>
    <source>
        <strain>CWL029</strain>
    </source>
</reference>
<reference key="2">
    <citation type="journal article" date="2000" name="Nucleic Acids Res.">
        <title>Genome sequences of Chlamydia trachomatis MoPn and Chlamydia pneumoniae AR39.</title>
        <authorList>
            <person name="Read T.D."/>
            <person name="Brunham R.C."/>
            <person name="Shen C."/>
            <person name="Gill S.R."/>
            <person name="Heidelberg J.F."/>
            <person name="White O."/>
            <person name="Hickey E.K."/>
            <person name="Peterson J.D."/>
            <person name="Utterback T.R."/>
            <person name="Berry K.J."/>
            <person name="Bass S."/>
            <person name="Linher K.D."/>
            <person name="Weidman J.F."/>
            <person name="Khouri H.M."/>
            <person name="Craven B."/>
            <person name="Bowman C."/>
            <person name="Dodson R.J."/>
            <person name="Gwinn M.L."/>
            <person name="Nelson W.C."/>
            <person name="DeBoy R.T."/>
            <person name="Kolonay J.F."/>
            <person name="McClarty G."/>
            <person name="Salzberg S.L."/>
            <person name="Eisen J.A."/>
            <person name="Fraser C.M."/>
        </authorList>
    </citation>
    <scope>NUCLEOTIDE SEQUENCE [LARGE SCALE GENOMIC DNA]</scope>
    <source>
        <strain>AR39</strain>
    </source>
</reference>
<reference key="3">
    <citation type="journal article" date="2000" name="Nucleic Acids Res.">
        <title>Comparison of whole genome sequences of Chlamydia pneumoniae J138 from Japan and CWL029 from USA.</title>
        <authorList>
            <person name="Shirai M."/>
            <person name="Hirakawa H."/>
            <person name="Kimoto M."/>
            <person name="Tabuchi M."/>
            <person name="Kishi F."/>
            <person name="Ouchi K."/>
            <person name="Shiba T."/>
            <person name="Ishii K."/>
            <person name="Hattori M."/>
            <person name="Kuhara S."/>
            <person name="Nakazawa T."/>
        </authorList>
    </citation>
    <scope>NUCLEOTIDE SEQUENCE [LARGE SCALE GENOMIC DNA]</scope>
    <source>
        <strain>J138</strain>
    </source>
</reference>
<reference key="4">
    <citation type="submission" date="2002-05" db="EMBL/GenBank/DDBJ databases">
        <title>The genome sequence of Chlamydia pneumoniae TW183 and comparison with other Chlamydia strains based on whole genome sequence analysis.</title>
        <authorList>
            <person name="Geng M.M."/>
            <person name="Schuhmacher A."/>
            <person name="Muehldorfer I."/>
            <person name="Bensch K.W."/>
            <person name="Schaefer K.P."/>
            <person name="Schneider S."/>
            <person name="Pohl T."/>
            <person name="Essig A."/>
            <person name="Marre R."/>
            <person name="Melchers K."/>
        </authorList>
    </citation>
    <scope>NUCLEOTIDE SEQUENCE [LARGE SCALE GENOMIC DNA]</scope>
    <source>
        <strain>TW-183</strain>
    </source>
</reference>
<feature type="chain" id="PRO_0000077086" description="Large ribosomal subunit protein uL3">
    <location>
        <begin position="1"/>
        <end position="219"/>
    </location>
</feature>
<evidence type="ECO:0000255" key="1">
    <source>
        <dbReference type="HAMAP-Rule" id="MF_01325"/>
    </source>
</evidence>
<evidence type="ECO:0000305" key="2"/>
<dbReference type="EMBL" id="AE001363">
    <property type="protein sequence ID" value="AAD18786.1"/>
    <property type="status" value="ALT_INIT"/>
    <property type="molecule type" value="Genomic_DNA"/>
</dbReference>
<dbReference type="EMBL" id="AE002161">
    <property type="protein sequence ID" value="AAF37984.1"/>
    <property type="molecule type" value="Genomic_DNA"/>
</dbReference>
<dbReference type="EMBL" id="BA000008">
    <property type="protein sequence ID" value="BAA98854.1"/>
    <property type="status" value="ALT_INIT"/>
    <property type="molecule type" value="Genomic_DNA"/>
</dbReference>
<dbReference type="EMBL" id="AE009440">
    <property type="protein sequence ID" value="AAP98602.1"/>
    <property type="status" value="ALT_INIT"/>
    <property type="molecule type" value="Genomic_DNA"/>
</dbReference>
<dbReference type="PIR" id="A72056">
    <property type="entry name" value="A72056"/>
</dbReference>
<dbReference type="PIR" id="A81611">
    <property type="entry name" value="A81611"/>
</dbReference>
<dbReference type="PIR" id="D86571">
    <property type="entry name" value="D86571"/>
</dbReference>
<dbReference type="RefSeq" id="WP_010883285.1">
    <property type="nucleotide sequence ID" value="NZ_LN847257.1"/>
</dbReference>
<dbReference type="SMR" id="Q9Z7Q7"/>
<dbReference type="STRING" id="406984.CPK_ORF00047"/>
<dbReference type="GeneID" id="45050697"/>
<dbReference type="KEGG" id="cpa:CP_0100"/>
<dbReference type="KEGG" id="cpj:rl3"/>
<dbReference type="KEGG" id="cpn:CPn_0647"/>
<dbReference type="KEGG" id="cpt:CpB0673"/>
<dbReference type="eggNOG" id="COG0087">
    <property type="taxonomic scope" value="Bacteria"/>
</dbReference>
<dbReference type="HOGENOM" id="CLU_044142_4_1_0"/>
<dbReference type="OrthoDB" id="9806135at2"/>
<dbReference type="Proteomes" id="UP000000583">
    <property type="component" value="Chromosome"/>
</dbReference>
<dbReference type="Proteomes" id="UP000000801">
    <property type="component" value="Chromosome"/>
</dbReference>
<dbReference type="GO" id="GO:0022625">
    <property type="term" value="C:cytosolic large ribosomal subunit"/>
    <property type="evidence" value="ECO:0007669"/>
    <property type="project" value="TreeGrafter"/>
</dbReference>
<dbReference type="GO" id="GO:0019843">
    <property type="term" value="F:rRNA binding"/>
    <property type="evidence" value="ECO:0007669"/>
    <property type="project" value="UniProtKB-UniRule"/>
</dbReference>
<dbReference type="GO" id="GO:0003735">
    <property type="term" value="F:structural constituent of ribosome"/>
    <property type="evidence" value="ECO:0007669"/>
    <property type="project" value="InterPro"/>
</dbReference>
<dbReference type="GO" id="GO:0006412">
    <property type="term" value="P:translation"/>
    <property type="evidence" value="ECO:0007669"/>
    <property type="project" value="UniProtKB-UniRule"/>
</dbReference>
<dbReference type="FunFam" id="2.40.30.10:FF:000004">
    <property type="entry name" value="50S ribosomal protein L3"/>
    <property type="match status" value="1"/>
</dbReference>
<dbReference type="Gene3D" id="3.30.160.810">
    <property type="match status" value="1"/>
</dbReference>
<dbReference type="Gene3D" id="2.40.30.10">
    <property type="entry name" value="Translation factors"/>
    <property type="match status" value="1"/>
</dbReference>
<dbReference type="HAMAP" id="MF_01325_B">
    <property type="entry name" value="Ribosomal_uL3_B"/>
    <property type="match status" value="1"/>
</dbReference>
<dbReference type="InterPro" id="IPR000597">
    <property type="entry name" value="Ribosomal_uL3"/>
</dbReference>
<dbReference type="InterPro" id="IPR019927">
    <property type="entry name" value="Ribosomal_uL3_bac/org-type"/>
</dbReference>
<dbReference type="InterPro" id="IPR009000">
    <property type="entry name" value="Transl_B-barrel_sf"/>
</dbReference>
<dbReference type="NCBIfam" id="TIGR03625">
    <property type="entry name" value="L3_bact"/>
    <property type="match status" value="1"/>
</dbReference>
<dbReference type="PANTHER" id="PTHR11229">
    <property type="entry name" value="50S RIBOSOMAL PROTEIN L3"/>
    <property type="match status" value="1"/>
</dbReference>
<dbReference type="PANTHER" id="PTHR11229:SF16">
    <property type="entry name" value="LARGE RIBOSOMAL SUBUNIT PROTEIN UL3C"/>
    <property type="match status" value="1"/>
</dbReference>
<dbReference type="Pfam" id="PF00297">
    <property type="entry name" value="Ribosomal_L3"/>
    <property type="match status" value="1"/>
</dbReference>
<dbReference type="SUPFAM" id="SSF50447">
    <property type="entry name" value="Translation proteins"/>
    <property type="match status" value="1"/>
</dbReference>
<comment type="function">
    <text evidence="1">One of the primary rRNA binding proteins, it binds directly near the 3'-end of the 23S rRNA, where it nucleates assembly of the 50S subunit.</text>
</comment>
<comment type="subunit">
    <text evidence="1">Part of the 50S ribosomal subunit. Forms a cluster with proteins L14 and L19.</text>
</comment>
<comment type="similarity">
    <text evidence="1">Belongs to the universal ribosomal protein uL3 family.</text>
</comment>
<comment type="sequence caution" evidence="2">
    <conflict type="erroneous initiation">
        <sequence resource="EMBL-CDS" id="AAD18786"/>
    </conflict>
</comment>
<comment type="sequence caution" evidence="2">
    <conflict type="erroneous initiation">
        <sequence resource="EMBL-CDS" id="AAP98602"/>
    </conflict>
</comment>
<comment type="sequence caution" evidence="2">
    <conflict type="erroneous initiation">
        <sequence resource="EMBL-CDS" id="BAA98854"/>
    </conflict>
</comment>
<keyword id="KW-0687">Ribonucleoprotein</keyword>
<keyword id="KW-0689">Ribosomal protein</keyword>
<keyword id="KW-0694">RNA-binding</keyword>
<keyword id="KW-0699">rRNA-binding</keyword>
<accession>Q9Z7Q7</accession>
<accession>Q9JQL2</accession>
<accession>Q9JSC5</accession>
<organism>
    <name type="scientific">Chlamydia pneumoniae</name>
    <name type="common">Chlamydophila pneumoniae</name>
    <dbReference type="NCBI Taxonomy" id="83558"/>
    <lineage>
        <taxon>Bacteria</taxon>
        <taxon>Pseudomonadati</taxon>
        <taxon>Chlamydiota</taxon>
        <taxon>Chlamydiia</taxon>
        <taxon>Chlamydiales</taxon>
        <taxon>Chlamydiaceae</taxon>
        <taxon>Chlamydia/Chlamydophila group</taxon>
        <taxon>Chlamydia</taxon>
    </lineage>
</organism>
<proteinExistence type="inferred from homology"/>
<name>RL3_CHLPN</name>